<sequence>MSERAKLQKKKKVTEDLLDSLLLLPPWRNFAISQSHQSIIESSSQRLPEKMRIDENEGVSASSKHLVFAYYVTGHGFGHATRVVEVVRHLIAAGHDVHVVTGAPDFVFTSEIQSPRLKIRKVLLDCGAVQADALTVDRLASLEKYVETAVVPRAEILETEVEWLHSIKADFVVSDVVPVACRAAADAGIRSVCVTNFSWDFIYAEYVMAAGYHHRSIVWQIAEDYSHCEFLIRLPGYCPMPAFRDVIDVPLVVRRLHKSRKEVRKELGIAEDVNVVILNFGGQPSGWNLKETSLPTGWLCLVCGASETLELPPNFIKLAKDAYTPDIIAASDCMLGKIGYGTVSEALSYKVPFVFVRRDYFNEEPFLRNMLEFYQCGVEMIRRDLLMGQWTPYLERAVSLKPCYEGGINGGEIAAHILQETAIGRHCASDKLSGARRLRDAIILGYQLQRVPGRDIAIPEWYSRAENELGQSAGSSPTVQANENNSLVESCIDDFDILQGDVQGLSDTCTFLKSLAMLDAIHDSEKSTEKKTVRERKAAGGLFNWEEEIFVARAPGRLDVMGGIADYSGSLVLQMPIREACHVAVQRNLPGKHRLWKHAQARQQAKGQVPTPVLQIVSYGSEISNRAPTFDMDLSDFMDGDEPISYEKARKFFAQDPAQKWAAYVAGTILVLMIELGVRFEDSISLLVSSAVPEGKGVSSSAAVEVASMSAIAAAHGLSIDPRDLAILCQKVENHIVGAPCGVMDQMTSSCGEANKLLAMICQPAEVVGLVEIPNHVRFWGIDSGIRHSVGGADYRSVRVGAYMGRKMIKSMASSILSPSASSANGGNPEELEDEGIDLLEAEASLDYLCNLSPHRYEARYADKLPDIMLGQTFIEEYADHDDPVTVIDQKRSYSVKAPARHPIYENFRVKTFKALLTSATSDEQLTALGGLLYQCHYSYSACGLGSDGTNRLVQLVQGMQHNKSNSEDGTLYGAKITGGGSGGTVCVVGRNSLRSSQQILEIQQRYKAATGYLPLIFEGSSPGAGKFGYLRIRRRISL</sequence>
<proteinExistence type="evidence at protein level"/>
<comment type="function">
    <text evidence="3">Arabinose kinase. Involved in the salvage pathway which converts free L-arabinose to UDP-L-arabinose. May play a role in arabinose transport.</text>
</comment>
<comment type="catalytic activity">
    <reaction>
        <text>L-arabinose + ATP = beta-L-arabinose 1-phosphate + ADP + H(+)</text>
        <dbReference type="Rhea" id="RHEA:20153"/>
        <dbReference type="ChEBI" id="CHEBI:15378"/>
        <dbReference type="ChEBI" id="CHEBI:17535"/>
        <dbReference type="ChEBI" id="CHEBI:30616"/>
        <dbReference type="ChEBI" id="CHEBI:57521"/>
        <dbReference type="ChEBI" id="CHEBI:456216"/>
        <dbReference type="EC" id="2.7.1.46"/>
    </reaction>
</comment>
<comment type="subcellular location">
    <subcellularLocation>
        <location evidence="4">Membrane</location>
        <topology evidence="4">Single-pass membrane protein</topology>
    </subcellularLocation>
</comment>
<comment type="miscellaneous">
    <text>Sup1, a suppressor of the ara1-1 arabinose-sensitive phenotype, contains a second point mutation resulting in a premature stop codon and a complete loss of kinase activity. Therefore, the putative arabinose transport function is independent from the kinase activity.</text>
</comment>
<comment type="similarity">
    <text evidence="4">Belongs to the GHMP kinase family.</text>
</comment>
<comment type="sequence caution" evidence="4">
    <conflict type="frameshift">
        <sequence resource="EMBL" id="BT003908"/>
    </conflict>
</comment>
<comment type="sequence caution" evidence="4">
    <conflict type="erroneous initiation">
        <sequence resource="EMBL-CDS" id="CAA74753"/>
    </conflict>
    <text>Truncated N-terminus.</text>
</comment>
<name>ARAK_ARATH</name>
<feature type="chain" id="PRO_0000407404" description="L-arabinokinase">
    <location>
        <begin position="1"/>
        <end position="1039"/>
    </location>
</feature>
<feature type="transmembrane region" description="Helical" evidence="2">
    <location>
        <begin position="662"/>
        <end position="678"/>
    </location>
</feature>
<feature type="active site" description="Proton acceptor" evidence="1">
    <location>
        <position position="745"/>
    </location>
</feature>
<feature type="binding site" evidence="2">
    <location>
        <begin position="693"/>
        <end position="703"/>
    </location>
    <ligand>
        <name>ATP</name>
        <dbReference type="ChEBI" id="CHEBI:30616"/>
    </ligand>
</feature>
<feature type="site" description="Transition state stabilizer" evidence="1">
    <location>
        <position position="557"/>
    </location>
</feature>
<feature type="mutagenesis site" description="In ara1-1; arabinose sensitivity and loss of kinase activity." evidence="3">
    <original>E</original>
    <variation>K</variation>
    <location>
        <position position="705"/>
    </location>
</feature>
<feature type="sequence conflict" description="In Ref. 4; BT003908." evidence="4" ref="4">
    <original>K</original>
    <variation>E</variation>
    <location>
        <position position="144"/>
    </location>
</feature>
<feature type="sequence conflict" description="In Ref. 5; CAA74753." evidence="4" ref="5">
    <original>V</original>
    <variation>A</variation>
    <location>
        <position position="585"/>
    </location>
</feature>
<feature type="sequence conflict" description="In Ref. 6; BAH20381." evidence="4" ref="6">
    <original>E</original>
    <variation>G</variation>
    <location>
        <position position="681"/>
    </location>
</feature>
<feature type="sequence conflict" description="In Ref. 5; CAA74753." evidence="4" ref="5">
    <original>Q</original>
    <variation>E</variation>
    <location>
        <position position="890"/>
    </location>
</feature>
<feature type="sequence conflict" description="In Ref. 4; BT003908." evidence="4" ref="4">
    <original>Q</original>
    <variation>R</variation>
    <location>
        <position position="961"/>
    </location>
</feature>
<dbReference type="EC" id="2.7.1.46"/>
<dbReference type="EMBL" id="Z97340">
    <property type="protein sequence ID" value="CAB10392.1"/>
    <property type="molecule type" value="Genomic_DNA"/>
</dbReference>
<dbReference type="EMBL" id="AL161543">
    <property type="protein sequence ID" value="CAB78655.1"/>
    <property type="molecule type" value="Genomic_DNA"/>
</dbReference>
<dbReference type="EMBL" id="CP002687">
    <property type="protein sequence ID" value="AEE83696.1"/>
    <property type="molecule type" value="Genomic_DNA"/>
</dbReference>
<dbReference type="EMBL" id="BT003908">
    <property type="status" value="NOT_ANNOTATED_CDS"/>
    <property type="molecule type" value="mRNA"/>
</dbReference>
<dbReference type="EMBL" id="Y14404">
    <property type="protein sequence ID" value="CAA74753.1"/>
    <property type="status" value="ALT_INIT"/>
    <property type="molecule type" value="Genomic_DNA"/>
</dbReference>
<dbReference type="EMBL" id="AK317724">
    <property type="protein sequence ID" value="BAH20381.1"/>
    <property type="molecule type" value="mRNA"/>
</dbReference>
<dbReference type="EMBL" id="AK230073">
    <property type="protein sequence ID" value="BAF01893.1"/>
    <property type="molecule type" value="mRNA"/>
</dbReference>
<dbReference type="PIR" id="F71427">
    <property type="entry name" value="F71427"/>
</dbReference>
<dbReference type="RefSeq" id="NP_193348.1">
    <property type="nucleotide sequence ID" value="NM_117706.3"/>
</dbReference>
<dbReference type="SMR" id="O23461"/>
<dbReference type="BioGRID" id="12593">
    <property type="interactions" value="4"/>
</dbReference>
<dbReference type="FunCoup" id="O23461">
    <property type="interactions" value="1321"/>
</dbReference>
<dbReference type="IntAct" id="O23461">
    <property type="interactions" value="3"/>
</dbReference>
<dbReference type="STRING" id="3702.O23461"/>
<dbReference type="iPTMnet" id="O23461"/>
<dbReference type="PaxDb" id="3702-AT4G16130.1"/>
<dbReference type="ProteomicsDB" id="240888"/>
<dbReference type="EnsemblPlants" id="AT4G16130.1">
    <property type="protein sequence ID" value="AT4G16130.1"/>
    <property type="gene ID" value="AT4G16130"/>
</dbReference>
<dbReference type="GeneID" id="827299"/>
<dbReference type="Gramene" id="AT4G16130.1">
    <property type="protein sequence ID" value="AT4G16130.1"/>
    <property type="gene ID" value="AT4G16130"/>
</dbReference>
<dbReference type="KEGG" id="ath:AT4G16130"/>
<dbReference type="Araport" id="AT4G16130"/>
<dbReference type="TAIR" id="AT4G16130">
    <property type="gene designation" value="ARA1"/>
</dbReference>
<dbReference type="eggNOG" id="KOG0631">
    <property type="taxonomic scope" value="Eukaryota"/>
</dbReference>
<dbReference type="HOGENOM" id="CLU_012602_0_0_1"/>
<dbReference type="InParanoid" id="O23461"/>
<dbReference type="OMA" id="HYQCGVE"/>
<dbReference type="PhylomeDB" id="O23461"/>
<dbReference type="BioCyc" id="ARA:AT4G16130-MONOMER"/>
<dbReference type="BioCyc" id="MetaCyc:AT4G16130-MONOMER"/>
<dbReference type="BRENDA" id="2.7.1.46">
    <property type="organism ID" value="399"/>
</dbReference>
<dbReference type="PRO" id="PR:O23461"/>
<dbReference type="Proteomes" id="UP000006548">
    <property type="component" value="Chromosome 4"/>
</dbReference>
<dbReference type="ExpressionAtlas" id="O23461">
    <property type="expression patterns" value="baseline and differential"/>
</dbReference>
<dbReference type="GO" id="GO:0005829">
    <property type="term" value="C:cytosol"/>
    <property type="evidence" value="ECO:0000314"/>
    <property type="project" value="TAIR"/>
</dbReference>
<dbReference type="GO" id="GO:0016020">
    <property type="term" value="C:membrane"/>
    <property type="evidence" value="ECO:0007669"/>
    <property type="project" value="UniProtKB-SubCell"/>
</dbReference>
<dbReference type="GO" id="GO:0009506">
    <property type="term" value="C:plasmodesma"/>
    <property type="evidence" value="ECO:0007005"/>
    <property type="project" value="TAIR"/>
</dbReference>
<dbReference type="GO" id="GO:0005524">
    <property type="term" value="F:ATP binding"/>
    <property type="evidence" value="ECO:0007669"/>
    <property type="project" value="UniProtKB-KW"/>
</dbReference>
<dbReference type="GO" id="GO:0009702">
    <property type="term" value="F:L-arabinokinase activity"/>
    <property type="evidence" value="ECO:0000314"/>
    <property type="project" value="TAIR"/>
</dbReference>
<dbReference type="GO" id="GO:0019566">
    <property type="term" value="P:arabinose metabolic process"/>
    <property type="evidence" value="ECO:0000314"/>
    <property type="project" value="TAIR"/>
</dbReference>
<dbReference type="FunFam" id="3.40.50.2000:FF:000114">
    <property type="entry name" value="GHMP kinase-like"/>
    <property type="match status" value="1"/>
</dbReference>
<dbReference type="FunFam" id="3.30.230.10:FF:000037">
    <property type="entry name" value="L-arabinokinase"/>
    <property type="match status" value="1"/>
</dbReference>
<dbReference type="FunFam" id="3.30.70.890:FF:000008">
    <property type="entry name" value="L-arabinokinase"/>
    <property type="match status" value="1"/>
</dbReference>
<dbReference type="FunFam" id="3.40.50.2000:FF:000142">
    <property type="entry name" value="L-arabinokinase"/>
    <property type="match status" value="1"/>
</dbReference>
<dbReference type="Gene3D" id="3.30.230.10">
    <property type="match status" value="1"/>
</dbReference>
<dbReference type="Gene3D" id="3.30.70.890">
    <property type="entry name" value="GHMP kinase, C-terminal domain"/>
    <property type="match status" value="1"/>
</dbReference>
<dbReference type="Gene3D" id="3.40.50.2000">
    <property type="entry name" value="Glycogen Phosphorylase B"/>
    <property type="match status" value="1"/>
</dbReference>
<dbReference type="InterPro" id="IPR012369">
    <property type="entry name" value="Galk_glycosyltransferase"/>
</dbReference>
<dbReference type="InterPro" id="IPR019539">
    <property type="entry name" value="GalKase_N"/>
</dbReference>
<dbReference type="InterPro" id="IPR036554">
    <property type="entry name" value="GHMP_kinase_C_sf"/>
</dbReference>
<dbReference type="InterPro" id="IPR053205">
    <property type="entry name" value="GHMP_kinase_L-arabinokinase"/>
</dbReference>
<dbReference type="InterPro" id="IPR006204">
    <property type="entry name" value="GHMP_kinase_N_dom"/>
</dbReference>
<dbReference type="InterPro" id="IPR020568">
    <property type="entry name" value="Ribosomal_Su5_D2-typ_SF"/>
</dbReference>
<dbReference type="InterPro" id="IPR014721">
    <property type="entry name" value="Ribsml_uS5_D2-typ_fold_subgr"/>
</dbReference>
<dbReference type="PANTHER" id="PTHR38134:SF2">
    <property type="entry name" value="GALACTOKINASE"/>
    <property type="match status" value="1"/>
</dbReference>
<dbReference type="PANTHER" id="PTHR38134">
    <property type="entry name" value="SLR1395 PROTEIN"/>
    <property type="match status" value="1"/>
</dbReference>
<dbReference type="Pfam" id="PF10509">
    <property type="entry name" value="GalKase_gal_bdg"/>
    <property type="match status" value="1"/>
</dbReference>
<dbReference type="Pfam" id="PF00288">
    <property type="entry name" value="GHMP_kinases_N"/>
    <property type="match status" value="1"/>
</dbReference>
<dbReference type="PIRSF" id="PIRSF036399">
    <property type="entry name" value="Gal_kin_glcsltr"/>
    <property type="match status" value="1"/>
</dbReference>
<dbReference type="PRINTS" id="PR00959">
    <property type="entry name" value="MEVGALKINASE"/>
</dbReference>
<dbReference type="SUPFAM" id="SSF55060">
    <property type="entry name" value="GHMP Kinase, C-terminal domain"/>
    <property type="match status" value="1"/>
</dbReference>
<dbReference type="SUPFAM" id="SSF54211">
    <property type="entry name" value="Ribosomal protein S5 domain 2-like"/>
    <property type="match status" value="1"/>
</dbReference>
<dbReference type="SUPFAM" id="SSF53756">
    <property type="entry name" value="UDP-Glycosyltransferase/glycogen phosphorylase"/>
    <property type="match status" value="1"/>
</dbReference>
<evidence type="ECO:0000250" key="1"/>
<evidence type="ECO:0000255" key="2"/>
<evidence type="ECO:0000269" key="3">
    <source>
    </source>
</evidence>
<evidence type="ECO:0000305" key="4"/>
<organism>
    <name type="scientific">Arabidopsis thaliana</name>
    <name type="common">Mouse-ear cress</name>
    <dbReference type="NCBI Taxonomy" id="3702"/>
    <lineage>
        <taxon>Eukaryota</taxon>
        <taxon>Viridiplantae</taxon>
        <taxon>Streptophyta</taxon>
        <taxon>Embryophyta</taxon>
        <taxon>Tracheophyta</taxon>
        <taxon>Spermatophyta</taxon>
        <taxon>Magnoliopsida</taxon>
        <taxon>eudicotyledons</taxon>
        <taxon>Gunneridae</taxon>
        <taxon>Pentapetalae</taxon>
        <taxon>rosids</taxon>
        <taxon>malvids</taxon>
        <taxon>Brassicales</taxon>
        <taxon>Brassicaceae</taxon>
        <taxon>Camelineae</taxon>
        <taxon>Arabidopsis</taxon>
    </lineage>
</organism>
<protein>
    <recommendedName>
        <fullName>L-arabinokinase</fullName>
        <shortName>AtISA1</shortName>
        <ecNumber>2.7.1.46</ecNumber>
    </recommendedName>
</protein>
<gene>
    <name type="primary">ARA1</name>
    <name type="synonym">ISA1</name>
    <name type="ordered locus">At4g16130</name>
    <name type="ORF">dl4105w</name>
    <name type="ORF">FCAALL.288</name>
</gene>
<accession>O23461</accession>
<accession>B9DI14</accession>
<accession>O23723</accession>
<accession>Q0WLW4</accession>
<keyword id="KW-0067">ATP-binding</keyword>
<keyword id="KW-0119">Carbohydrate metabolism</keyword>
<keyword id="KW-0418">Kinase</keyword>
<keyword id="KW-0472">Membrane</keyword>
<keyword id="KW-0547">Nucleotide-binding</keyword>
<keyword id="KW-1185">Reference proteome</keyword>
<keyword id="KW-0808">Transferase</keyword>
<keyword id="KW-0812">Transmembrane</keyword>
<keyword id="KW-1133">Transmembrane helix</keyword>
<reference key="1">
    <citation type="journal article" date="1998" name="Nature">
        <title>Analysis of 1.9 Mb of contiguous sequence from chromosome 4 of Arabidopsis thaliana.</title>
        <authorList>
            <person name="Bevan M."/>
            <person name="Bancroft I."/>
            <person name="Bent E."/>
            <person name="Love K."/>
            <person name="Goodman H.M."/>
            <person name="Dean C."/>
            <person name="Bergkamp R."/>
            <person name="Dirkse W."/>
            <person name="van Staveren M."/>
            <person name="Stiekema W."/>
            <person name="Drost L."/>
            <person name="Ridley P."/>
            <person name="Hudson S.-A."/>
            <person name="Patel K."/>
            <person name="Murphy G."/>
            <person name="Piffanelli P."/>
            <person name="Wedler H."/>
            <person name="Wedler E."/>
            <person name="Wambutt R."/>
            <person name="Weitzenegger T."/>
            <person name="Pohl T."/>
            <person name="Terryn N."/>
            <person name="Gielen J."/>
            <person name="Villarroel R."/>
            <person name="De Clercq R."/>
            <person name="van Montagu M."/>
            <person name="Lecharny A."/>
            <person name="Aubourg S."/>
            <person name="Gy I."/>
            <person name="Kreis M."/>
            <person name="Lao N."/>
            <person name="Kavanagh T."/>
            <person name="Hempel S."/>
            <person name="Kotter P."/>
            <person name="Entian K.-D."/>
            <person name="Rieger M."/>
            <person name="Schaefer M."/>
            <person name="Funk B."/>
            <person name="Mueller-Auer S."/>
            <person name="Silvey M."/>
            <person name="James R."/>
            <person name="Monfort A."/>
            <person name="Pons A."/>
            <person name="Puigdomenech P."/>
            <person name="Douka A."/>
            <person name="Voukelatou E."/>
            <person name="Milioni D."/>
            <person name="Hatzopoulos P."/>
            <person name="Piravandi E."/>
            <person name="Obermaier B."/>
            <person name="Hilbert H."/>
            <person name="Duesterhoeft A."/>
            <person name="Moores T."/>
            <person name="Jones J.D.G."/>
            <person name="Eneva T."/>
            <person name="Palme K."/>
            <person name="Benes V."/>
            <person name="Rechmann S."/>
            <person name="Ansorge W."/>
            <person name="Cooke R."/>
            <person name="Berger C."/>
            <person name="Delseny M."/>
            <person name="Voet M."/>
            <person name="Volckaert G."/>
            <person name="Mewes H.-W."/>
            <person name="Klosterman S."/>
            <person name="Schueller C."/>
            <person name="Chalwatzis N."/>
        </authorList>
    </citation>
    <scope>NUCLEOTIDE SEQUENCE [LARGE SCALE GENOMIC DNA]</scope>
    <source>
        <strain>cv. Columbia</strain>
    </source>
</reference>
<reference key="2">
    <citation type="journal article" date="1999" name="Nature">
        <title>Sequence and analysis of chromosome 4 of the plant Arabidopsis thaliana.</title>
        <authorList>
            <person name="Mayer K.F.X."/>
            <person name="Schueller C."/>
            <person name="Wambutt R."/>
            <person name="Murphy G."/>
            <person name="Volckaert G."/>
            <person name="Pohl T."/>
            <person name="Duesterhoeft A."/>
            <person name="Stiekema W."/>
            <person name="Entian K.-D."/>
            <person name="Terryn N."/>
            <person name="Harris B."/>
            <person name="Ansorge W."/>
            <person name="Brandt P."/>
            <person name="Grivell L.A."/>
            <person name="Rieger M."/>
            <person name="Weichselgartner M."/>
            <person name="de Simone V."/>
            <person name="Obermaier B."/>
            <person name="Mache R."/>
            <person name="Mueller M."/>
            <person name="Kreis M."/>
            <person name="Delseny M."/>
            <person name="Puigdomenech P."/>
            <person name="Watson M."/>
            <person name="Schmidtheini T."/>
            <person name="Reichert B."/>
            <person name="Portetelle D."/>
            <person name="Perez-Alonso M."/>
            <person name="Boutry M."/>
            <person name="Bancroft I."/>
            <person name="Vos P."/>
            <person name="Hoheisel J."/>
            <person name="Zimmermann W."/>
            <person name="Wedler H."/>
            <person name="Ridley P."/>
            <person name="Langham S.-A."/>
            <person name="McCullagh B."/>
            <person name="Bilham L."/>
            <person name="Robben J."/>
            <person name="van der Schueren J."/>
            <person name="Grymonprez B."/>
            <person name="Chuang Y.-J."/>
            <person name="Vandenbussche F."/>
            <person name="Braeken M."/>
            <person name="Weltjens I."/>
            <person name="Voet M."/>
            <person name="Bastiaens I."/>
            <person name="Aert R."/>
            <person name="Defoor E."/>
            <person name="Weitzenegger T."/>
            <person name="Bothe G."/>
            <person name="Ramsperger U."/>
            <person name="Hilbert H."/>
            <person name="Braun M."/>
            <person name="Holzer E."/>
            <person name="Brandt A."/>
            <person name="Peters S."/>
            <person name="van Staveren M."/>
            <person name="Dirkse W."/>
            <person name="Mooijman P."/>
            <person name="Klein Lankhorst R."/>
            <person name="Rose M."/>
            <person name="Hauf J."/>
            <person name="Koetter P."/>
            <person name="Berneiser S."/>
            <person name="Hempel S."/>
            <person name="Feldpausch M."/>
            <person name="Lamberth S."/>
            <person name="Van den Daele H."/>
            <person name="De Keyser A."/>
            <person name="Buysshaert C."/>
            <person name="Gielen J."/>
            <person name="Villarroel R."/>
            <person name="De Clercq R."/>
            <person name="van Montagu M."/>
            <person name="Rogers J."/>
            <person name="Cronin A."/>
            <person name="Quail M.A."/>
            <person name="Bray-Allen S."/>
            <person name="Clark L."/>
            <person name="Doggett J."/>
            <person name="Hall S."/>
            <person name="Kay M."/>
            <person name="Lennard N."/>
            <person name="McLay K."/>
            <person name="Mayes R."/>
            <person name="Pettett A."/>
            <person name="Rajandream M.A."/>
            <person name="Lyne M."/>
            <person name="Benes V."/>
            <person name="Rechmann S."/>
            <person name="Borkova D."/>
            <person name="Bloecker H."/>
            <person name="Scharfe M."/>
            <person name="Grimm M."/>
            <person name="Loehnert T.-H."/>
            <person name="Dose S."/>
            <person name="de Haan M."/>
            <person name="Maarse A.C."/>
            <person name="Schaefer M."/>
            <person name="Mueller-Auer S."/>
            <person name="Gabel C."/>
            <person name="Fuchs M."/>
            <person name="Fartmann B."/>
            <person name="Granderath K."/>
            <person name="Dauner D."/>
            <person name="Herzl A."/>
            <person name="Neumann S."/>
            <person name="Argiriou A."/>
            <person name="Vitale D."/>
            <person name="Liguori R."/>
            <person name="Piravandi E."/>
            <person name="Massenet O."/>
            <person name="Quigley F."/>
            <person name="Clabauld G."/>
            <person name="Muendlein A."/>
            <person name="Felber R."/>
            <person name="Schnabl S."/>
            <person name="Hiller R."/>
            <person name="Schmidt W."/>
            <person name="Lecharny A."/>
            <person name="Aubourg S."/>
            <person name="Chefdor F."/>
            <person name="Cooke R."/>
            <person name="Berger C."/>
            <person name="Monfort A."/>
            <person name="Casacuberta E."/>
            <person name="Gibbons T."/>
            <person name="Weber N."/>
            <person name="Vandenbol M."/>
            <person name="Bargues M."/>
            <person name="Terol J."/>
            <person name="Torres A."/>
            <person name="Perez-Perez A."/>
            <person name="Purnelle B."/>
            <person name="Bent E."/>
            <person name="Johnson S."/>
            <person name="Tacon D."/>
            <person name="Jesse T."/>
            <person name="Heijnen L."/>
            <person name="Schwarz S."/>
            <person name="Scholler P."/>
            <person name="Heber S."/>
            <person name="Francs P."/>
            <person name="Bielke C."/>
            <person name="Frishman D."/>
            <person name="Haase D."/>
            <person name="Lemcke K."/>
            <person name="Mewes H.-W."/>
            <person name="Stocker S."/>
            <person name="Zaccaria P."/>
            <person name="Bevan M."/>
            <person name="Wilson R.K."/>
            <person name="de la Bastide M."/>
            <person name="Habermann K."/>
            <person name="Parnell L."/>
            <person name="Dedhia N."/>
            <person name="Gnoj L."/>
            <person name="Schutz K."/>
            <person name="Huang E."/>
            <person name="Spiegel L."/>
            <person name="Sekhon M."/>
            <person name="Murray J."/>
            <person name="Sheet P."/>
            <person name="Cordes M."/>
            <person name="Abu-Threideh J."/>
            <person name="Stoneking T."/>
            <person name="Kalicki J."/>
            <person name="Graves T."/>
            <person name="Harmon G."/>
            <person name="Edwards J."/>
            <person name="Latreille P."/>
            <person name="Courtney L."/>
            <person name="Cloud J."/>
            <person name="Abbott A."/>
            <person name="Scott K."/>
            <person name="Johnson D."/>
            <person name="Minx P."/>
            <person name="Bentley D."/>
            <person name="Fulton B."/>
            <person name="Miller N."/>
            <person name="Greco T."/>
            <person name="Kemp K."/>
            <person name="Kramer J."/>
            <person name="Fulton L."/>
            <person name="Mardis E."/>
            <person name="Dante M."/>
            <person name="Pepin K."/>
            <person name="Hillier L.W."/>
            <person name="Nelson J."/>
            <person name="Spieth J."/>
            <person name="Ryan E."/>
            <person name="Andrews S."/>
            <person name="Geisel C."/>
            <person name="Layman D."/>
            <person name="Du H."/>
            <person name="Ali J."/>
            <person name="Berghoff A."/>
            <person name="Jones K."/>
            <person name="Drone K."/>
            <person name="Cotton M."/>
            <person name="Joshu C."/>
            <person name="Antonoiu B."/>
            <person name="Zidanic M."/>
            <person name="Strong C."/>
            <person name="Sun H."/>
            <person name="Lamar B."/>
            <person name="Yordan C."/>
            <person name="Ma P."/>
            <person name="Zhong J."/>
            <person name="Preston R."/>
            <person name="Vil D."/>
            <person name="Shekher M."/>
            <person name="Matero A."/>
            <person name="Shah R."/>
            <person name="Swaby I.K."/>
            <person name="O'Shaughnessy A."/>
            <person name="Rodriguez M."/>
            <person name="Hoffman J."/>
            <person name="Till S."/>
            <person name="Granat S."/>
            <person name="Shohdy N."/>
            <person name="Hasegawa A."/>
            <person name="Hameed A."/>
            <person name="Lodhi M."/>
            <person name="Johnson A."/>
            <person name="Chen E."/>
            <person name="Marra M.A."/>
            <person name="Martienssen R."/>
            <person name="McCombie W.R."/>
        </authorList>
    </citation>
    <scope>NUCLEOTIDE SEQUENCE [LARGE SCALE GENOMIC DNA]</scope>
    <source>
        <strain>cv. Columbia</strain>
    </source>
</reference>
<reference key="3">
    <citation type="journal article" date="2017" name="Plant J.">
        <title>Araport11: a complete reannotation of the Arabidopsis thaliana reference genome.</title>
        <authorList>
            <person name="Cheng C.Y."/>
            <person name="Krishnakumar V."/>
            <person name="Chan A.P."/>
            <person name="Thibaud-Nissen F."/>
            <person name="Schobel S."/>
            <person name="Town C.D."/>
        </authorList>
    </citation>
    <scope>GENOME REANNOTATION</scope>
    <source>
        <strain>cv. Columbia</strain>
    </source>
</reference>
<reference key="4">
    <citation type="journal article" date="2003" name="Science">
        <title>Empirical analysis of transcriptional activity in the Arabidopsis genome.</title>
        <authorList>
            <person name="Yamada K."/>
            <person name="Lim J."/>
            <person name="Dale J.M."/>
            <person name="Chen H."/>
            <person name="Shinn P."/>
            <person name="Palm C.J."/>
            <person name="Southwick A.M."/>
            <person name="Wu H.C."/>
            <person name="Kim C.J."/>
            <person name="Nguyen M."/>
            <person name="Pham P.K."/>
            <person name="Cheuk R.F."/>
            <person name="Karlin-Newmann G."/>
            <person name="Liu S.X."/>
            <person name="Lam B."/>
            <person name="Sakano H."/>
            <person name="Wu T."/>
            <person name="Yu G."/>
            <person name="Miranda M."/>
            <person name="Quach H.L."/>
            <person name="Tripp M."/>
            <person name="Chang C.H."/>
            <person name="Lee J.M."/>
            <person name="Toriumi M.J."/>
            <person name="Chan M.M."/>
            <person name="Tang C.C."/>
            <person name="Onodera C.S."/>
            <person name="Deng J.M."/>
            <person name="Akiyama K."/>
            <person name="Ansari Y."/>
            <person name="Arakawa T."/>
            <person name="Banh J."/>
            <person name="Banno F."/>
            <person name="Bowser L."/>
            <person name="Brooks S.Y."/>
            <person name="Carninci P."/>
            <person name="Chao Q."/>
            <person name="Choy N."/>
            <person name="Enju A."/>
            <person name="Goldsmith A.D."/>
            <person name="Gurjal M."/>
            <person name="Hansen N.F."/>
            <person name="Hayashizaki Y."/>
            <person name="Johnson-Hopson C."/>
            <person name="Hsuan V.W."/>
            <person name="Iida K."/>
            <person name="Karnes M."/>
            <person name="Khan S."/>
            <person name="Koesema E."/>
            <person name="Ishida J."/>
            <person name="Jiang P.X."/>
            <person name="Jones T."/>
            <person name="Kawai J."/>
            <person name="Kamiya A."/>
            <person name="Meyers C."/>
            <person name="Nakajima M."/>
            <person name="Narusaka M."/>
            <person name="Seki M."/>
            <person name="Sakurai T."/>
            <person name="Satou M."/>
            <person name="Tamse R."/>
            <person name="Vaysberg M."/>
            <person name="Wallender E.K."/>
            <person name="Wong C."/>
            <person name="Yamamura Y."/>
            <person name="Yuan S."/>
            <person name="Shinozaki K."/>
            <person name="Davis R.W."/>
            <person name="Theologis A."/>
            <person name="Ecker J.R."/>
        </authorList>
    </citation>
    <scope>NUCLEOTIDE SEQUENCE [LARGE SCALE MRNA]</scope>
    <source>
        <strain>cv. Columbia</strain>
    </source>
</reference>
<reference key="5">
    <citation type="journal article" date="1998" name="Gene">
        <title>Analysis of a 14-kb fragment containing a putative cell wall gene and a candidate for the ARA1, arabinose kinase, gene from chromosome IV of Arabidopsis thaliana.</title>
        <authorList>
            <person name="Gy I."/>
            <person name="Aubourg S."/>
            <person name="Sherson S."/>
            <person name="Cobbett C.S."/>
            <person name="Cheron A."/>
            <person name="Kreis M."/>
            <person name="Lecharny A."/>
        </authorList>
    </citation>
    <scope>NUCLEOTIDE SEQUENCE [GENOMIC DNA] OF 9-1039</scope>
</reference>
<reference key="6">
    <citation type="journal article" date="2009" name="DNA Res.">
        <title>Analysis of multiple occurrences of alternative splicing events in Arabidopsis thaliana using novel sequenced full-length cDNAs.</title>
        <authorList>
            <person name="Iida K."/>
            <person name="Fukami-Kobayashi K."/>
            <person name="Toyoda A."/>
            <person name="Sakaki Y."/>
            <person name="Kobayashi M."/>
            <person name="Seki M."/>
            <person name="Shinozaki K."/>
        </authorList>
    </citation>
    <scope>NUCLEOTIDE SEQUENCE [LARGE SCALE MRNA] OF 155-1039</scope>
    <source>
        <strain>cv. Columbia</strain>
    </source>
</reference>
<reference key="7">
    <citation type="submission" date="2006-07" db="EMBL/GenBank/DDBJ databases">
        <title>Large-scale analysis of RIKEN Arabidopsis full-length (RAFL) cDNAs.</title>
        <authorList>
            <person name="Totoki Y."/>
            <person name="Seki M."/>
            <person name="Ishida J."/>
            <person name="Nakajima M."/>
            <person name="Enju A."/>
            <person name="Kamiya A."/>
            <person name="Narusaka M."/>
            <person name="Shin-i T."/>
            <person name="Nakagawa M."/>
            <person name="Sakamoto N."/>
            <person name="Oishi K."/>
            <person name="Kohara Y."/>
            <person name="Kobayashi M."/>
            <person name="Toyoda A."/>
            <person name="Sakaki Y."/>
            <person name="Sakurai T."/>
            <person name="Iida K."/>
            <person name="Akiyama K."/>
            <person name="Satou M."/>
            <person name="Toyoda T."/>
            <person name="Konagaya A."/>
            <person name="Carninci P."/>
            <person name="Kawai J."/>
            <person name="Hayashizaki Y."/>
            <person name="Shinozaki K."/>
        </authorList>
    </citation>
    <scope>NUCLEOTIDE SEQUENCE [LARGE SCALE MRNA] OF 453-1039</scope>
    <source>
        <strain>cv. Columbia</strain>
    </source>
</reference>
<reference key="8">
    <citation type="journal article" date="1999" name="Plant Mol. Biol.">
        <title>The arabinose kinase, ARA1, gene of Arabidopsis is a novel member of the galactose kinase gene family.</title>
        <authorList>
            <person name="Sherson S."/>
            <person name="Gy I."/>
            <person name="Medd J."/>
            <person name="Schmidt R."/>
            <person name="Dean C."/>
            <person name="Kreis M."/>
            <person name="Lecharny A."/>
            <person name="Cobbett C."/>
        </authorList>
    </citation>
    <scope>FUNCTION</scope>
    <scope>MUTAGENESIS OF GLU-705</scope>
</reference>
<reference key="9">
    <citation type="journal article" date="2007" name="Mol. Cell. Proteomics">
        <title>Multidimensional protein identification technology (MudPIT) analysis of ubiquitinated proteins in plants.</title>
        <authorList>
            <person name="Maor R."/>
            <person name="Jones A."/>
            <person name="Nuehse T.S."/>
            <person name="Studholme D.J."/>
            <person name="Peck S.C."/>
            <person name="Shirasu K."/>
        </authorList>
    </citation>
    <scope>IDENTIFICATION BY MASS SPECTROMETRY [LARGE SCALE ANALYSIS]</scope>
    <source>
        <strain>cv. Landsberg erecta</strain>
    </source>
</reference>